<comment type="function">
    <text evidence="1">S-adenosyl-L-methionine-dependent methyltransferase that acts as a component of the wyosine derivatives biosynthesis pathway. Probably methylates N-4 position of wybutosine-86 to produce wybutosine-72.</text>
</comment>
<comment type="catalytic activity">
    <reaction evidence="1">
        <text>4-demethyl-7-[(3S)-3-amino-3-carboxypropyl]wyosine(37) in tRNA(Phe) + S-adenosyl-L-methionine = 7-[(3S)-3-amino-3-carboxypropyl]wyosine(37) in tRNA(Phe) + S-adenosyl-L-homocysteine + H(+)</text>
        <dbReference type="Rhea" id="RHEA:36635"/>
        <dbReference type="Rhea" id="RHEA-COMP:10378"/>
        <dbReference type="Rhea" id="RHEA-COMP:10379"/>
        <dbReference type="ChEBI" id="CHEBI:15378"/>
        <dbReference type="ChEBI" id="CHEBI:57856"/>
        <dbReference type="ChEBI" id="CHEBI:59789"/>
        <dbReference type="ChEBI" id="CHEBI:73543"/>
        <dbReference type="ChEBI" id="CHEBI:73550"/>
        <dbReference type="EC" id="2.1.1.282"/>
    </reaction>
</comment>
<comment type="similarity">
    <text evidence="1">Belongs to the TYW3 family.</text>
</comment>
<evidence type="ECO:0000255" key="1">
    <source>
        <dbReference type="HAMAP-Rule" id="MF_00266"/>
    </source>
</evidence>
<evidence type="ECO:0007829" key="2">
    <source>
        <dbReference type="PDB" id="2DVK"/>
    </source>
</evidence>
<accession>Q9YDV3</accession>
<organism>
    <name type="scientific">Aeropyrum pernix (strain ATCC 700893 / DSM 11879 / JCM 9820 / NBRC 100138 / K1)</name>
    <dbReference type="NCBI Taxonomy" id="272557"/>
    <lineage>
        <taxon>Archaea</taxon>
        <taxon>Thermoproteota</taxon>
        <taxon>Thermoprotei</taxon>
        <taxon>Desulfurococcales</taxon>
        <taxon>Desulfurococcaceae</taxon>
        <taxon>Aeropyrum</taxon>
    </lineage>
</organism>
<dbReference type="EC" id="2.1.1.282" evidence="1"/>
<dbReference type="EMBL" id="BA000002">
    <property type="protein sequence ID" value="BAA79794.1"/>
    <property type="molecule type" value="Genomic_DNA"/>
</dbReference>
<dbReference type="PIR" id="B72674">
    <property type="entry name" value="B72674"/>
</dbReference>
<dbReference type="RefSeq" id="WP_010865993.1">
    <property type="nucleotide sequence ID" value="NC_000854.2"/>
</dbReference>
<dbReference type="PDB" id="2DVK">
    <property type="method" value="X-ray"/>
    <property type="resolution" value="1.80 A"/>
    <property type="chains" value="A=1-188"/>
</dbReference>
<dbReference type="PDBsum" id="2DVK"/>
<dbReference type="SMR" id="Q9YDV3"/>
<dbReference type="STRING" id="272557.APE_0816"/>
<dbReference type="EnsemblBacteria" id="BAA79794">
    <property type="protein sequence ID" value="BAA79794"/>
    <property type="gene ID" value="APE_0816"/>
</dbReference>
<dbReference type="GeneID" id="1444918"/>
<dbReference type="KEGG" id="ape:APE_0816"/>
<dbReference type="eggNOG" id="arCOG04156">
    <property type="taxonomic scope" value="Archaea"/>
</dbReference>
<dbReference type="EvolutionaryTrace" id="Q9YDV3"/>
<dbReference type="Proteomes" id="UP000002518">
    <property type="component" value="Chromosome"/>
</dbReference>
<dbReference type="GO" id="GO:0008175">
    <property type="term" value="F:tRNA methyltransferase activity"/>
    <property type="evidence" value="ECO:0007669"/>
    <property type="project" value="InterPro"/>
</dbReference>
<dbReference type="GO" id="GO:0030488">
    <property type="term" value="P:tRNA methylation"/>
    <property type="evidence" value="ECO:0007669"/>
    <property type="project" value="InterPro"/>
</dbReference>
<dbReference type="GO" id="GO:0031591">
    <property type="term" value="P:wybutosine biosynthetic process"/>
    <property type="evidence" value="ECO:0007669"/>
    <property type="project" value="InterPro"/>
</dbReference>
<dbReference type="Gene3D" id="3.30.1960.10">
    <property type="entry name" value="tRNA wybutosine-synthesizing-like"/>
    <property type="match status" value="1"/>
</dbReference>
<dbReference type="HAMAP" id="MF_00266">
    <property type="entry name" value="TYW3_archaea"/>
    <property type="match status" value="1"/>
</dbReference>
<dbReference type="InterPro" id="IPR022908">
    <property type="entry name" value="Taw3"/>
</dbReference>
<dbReference type="InterPro" id="IPR003827">
    <property type="entry name" value="tRNA_yW-synthesising"/>
</dbReference>
<dbReference type="InterPro" id="IPR036602">
    <property type="entry name" value="tRNA_yW-synthesising-like_sf"/>
</dbReference>
<dbReference type="NCBIfam" id="NF003267">
    <property type="entry name" value="PRK04235.1-6"/>
    <property type="match status" value="1"/>
</dbReference>
<dbReference type="PANTHER" id="PTHR48418">
    <property type="entry name" value="TRNA WYBUTOSINE-SYNTHESIZING PROTEIN 3"/>
    <property type="match status" value="1"/>
</dbReference>
<dbReference type="PANTHER" id="PTHR48418:SF1">
    <property type="entry name" value="TRNA WYBUTOSINE-SYNTHESIZING PROTEIN 3"/>
    <property type="match status" value="1"/>
</dbReference>
<dbReference type="Pfam" id="PF02676">
    <property type="entry name" value="TYW3"/>
    <property type="match status" value="1"/>
</dbReference>
<dbReference type="SUPFAM" id="SSF111278">
    <property type="entry name" value="SSo0622-like"/>
    <property type="match status" value="1"/>
</dbReference>
<reference key="1">
    <citation type="journal article" date="1999" name="DNA Res.">
        <title>Complete genome sequence of an aerobic hyper-thermophilic crenarchaeon, Aeropyrum pernix K1.</title>
        <authorList>
            <person name="Kawarabayasi Y."/>
            <person name="Hino Y."/>
            <person name="Horikawa H."/>
            <person name="Yamazaki S."/>
            <person name="Haikawa Y."/>
            <person name="Jin-no K."/>
            <person name="Takahashi M."/>
            <person name="Sekine M."/>
            <person name="Baba S."/>
            <person name="Ankai A."/>
            <person name="Kosugi H."/>
            <person name="Hosoyama A."/>
            <person name="Fukui S."/>
            <person name="Nagai Y."/>
            <person name="Nishijima K."/>
            <person name="Nakazawa H."/>
            <person name="Takamiya M."/>
            <person name="Masuda S."/>
            <person name="Funahashi T."/>
            <person name="Tanaka T."/>
            <person name="Kudoh Y."/>
            <person name="Yamazaki J."/>
            <person name="Kushida N."/>
            <person name="Oguchi A."/>
            <person name="Aoki K."/>
            <person name="Kubota K."/>
            <person name="Nakamura Y."/>
            <person name="Nomura N."/>
            <person name="Sako Y."/>
            <person name="Kikuchi H."/>
        </authorList>
    </citation>
    <scope>NUCLEOTIDE SEQUENCE [LARGE SCALE GENOMIC DNA]</scope>
    <source>
        <strain>ATCC 700893 / DSM 11879 / JCM 9820 / NBRC 100138 / K1</strain>
    </source>
</reference>
<reference key="2">
    <citation type="submission" date="2007-01" db="PDB data bank">
        <title>Crystal structure of hypothetical protein from Aeropyrum pernix.</title>
        <authorList>
            <consortium name="RIKEN structural genomics initiative (RSGI)"/>
        </authorList>
    </citation>
    <scope>X-RAY CRYSTALLOGRAPHY (1.8 ANGSTROMS)</scope>
</reference>
<protein>
    <recommendedName>
        <fullName evidence="1">tRNA(Phe) 7-((3-amino-3-carboxypropyl)-4-demethylwyosine(37)-N(4))-methyltransferase</fullName>
        <ecNumber evidence="1">2.1.1.282</ecNumber>
    </recommendedName>
    <alternativeName>
        <fullName evidence="1">tRNA wyosine derivatives biosynthesis protein Taw3</fullName>
    </alternativeName>
</protein>
<feature type="chain" id="PRO_0000157091" description="tRNA(Phe) 7-((3-amino-3-carboxypropyl)-4-demethylwyosine(37)-N(4))-methyltransferase">
    <location>
        <begin position="1"/>
        <end position="188"/>
    </location>
</feature>
<feature type="helix" evidence="2">
    <location>
        <begin position="19"/>
        <end position="21"/>
    </location>
</feature>
<feature type="helix" evidence="2">
    <location>
        <begin position="22"/>
        <end position="29"/>
    </location>
</feature>
<feature type="strand" evidence="2">
    <location>
        <begin position="34"/>
        <end position="40"/>
    </location>
</feature>
<feature type="strand" evidence="2">
    <location>
        <begin position="43"/>
        <end position="50"/>
    </location>
</feature>
<feature type="strand" evidence="2">
    <location>
        <begin position="60"/>
        <end position="66"/>
    </location>
</feature>
<feature type="helix" evidence="2">
    <location>
        <begin position="70"/>
        <end position="77"/>
    </location>
</feature>
<feature type="strand" evidence="2">
    <location>
        <begin position="82"/>
        <end position="89"/>
    </location>
</feature>
<feature type="strand" evidence="2">
    <location>
        <begin position="92"/>
        <end position="99"/>
    </location>
</feature>
<feature type="helix" evidence="2">
    <location>
        <begin position="100"/>
        <end position="112"/>
    </location>
</feature>
<feature type="strand" evidence="2">
    <location>
        <begin position="117"/>
        <end position="123"/>
    </location>
</feature>
<feature type="strand" evidence="2">
    <location>
        <begin position="129"/>
        <end position="134"/>
    </location>
</feature>
<feature type="strand" evidence="2">
    <location>
        <begin position="138"/>
        <end position="145"/>
    </location>
</feature>
<feature type="helix" evidence="2">
    <location>
        <begin position="153"/>
        <end position="183"/>
    </location>
</feature>
<sequence length="188" mass="20994">MGSIEEVLLEERLIGYLDPGAEKVLARINRPSKIVSTSSCTGRITLIEGEAHWLRNGARVAYKTHHPISRSEVERVLRRGFTNLWLKVTGPILHLRVEGWQCAKSLLEAARRNGFKHSGVISIAEDSRLVIEIMSSQSMSVPLVMEGARIVGDDALDMLIEKANTILVESRIGLDTFSREVEELVECF</sequence>
<name>TYW3_AERPE</name>
<gene>
    <name evidence="1" type="primary">taw3</name>
    <name type="ordered locus">APE_0816</name>
</gene>
<keyword id="KW-0002">3D-structure</keyword>
<keyword id="KW-0489">Methyltransferase</keyword>
<keyword id="KW-1185">Reference proteome</keyword>
<keyword id="KW-0949">S-adenosyl-L-methionine</keyword>
<keyword id="KW-0808">Transferase</keyword>
<keyword id="KW-0819">tRNA processing</keyword>
<proteinExistence type="evidence at protein level"/>